<name>SYM_ACIF5</name>
<accession>B5ENA8</accession>
<reference key="1">
    <citation type="submission" date="2008-08" db="EMBL/GenBank/DDBJ databases">
        <title>Complete sequence of Acidithiobacillus ferrooxidans ATCC 53993.</title>
        <authorList>
            <person name="Lucas S."/>
            <person name="Copeland A."/>
            <person name="Lapidus A."/>
            <person name="Glavina del Rio T."/>
            <person name="Dalin E."/>
            <person name="Tice H."/>
            <person name="Bruce D."/>
            <person name="Goodwin L."/>
            <person name="Pitluck S."/>
            <person name="Sims D."/>
            <person name="Brettin T."/>
            <person name="Detter J.C."/>
            <person name="Han C."/>
            <person name="Kuske C.R."/>
            <person name="Larimer F."/>
            <person name="Land M."/>
            <person name="Hauser L."/>
            <person name="Kyrpides N."/>
            <person name="Lykidis A."/>
            <person name="Borole A.P."/>
        </authorList>
    </citation>
    <scope>NUCLEOTIDE SEQUENCE [LARGE SCALE GENOMIC DNA]</scope>
    <source>
        <strain>ATCC 53993 / BNL-5-31</strain>
    </source>
</reference>
<protein>
    <recommendedName>
        <fullName evidence="1">Methionine--tRNA ligase</fullName>
        <ecNumber evidence="1">6.1.1.10</ecNumber>
    </recommendedName>
    <alternativeName>
        <fullName evidence="1">Methionyl-tRNA synthetase</fullName>
        <shortName evidence="1">MetRS</shortName>
    </alternativeName>
</protein>
<comment type="function">
    <text evidence="1">Is required not only for elongation of protein synthesis but also for the initiation of all mRNA translation through initiator tRNA(fMet) aminoacylation.</text>
</comment>
<comment type="catalytic activity">
    <reaction evidence="1">
        <text>tRNA(Met) + L-methionine + ATP = L-methionyl-tRNA(Met) + AMP + diphosphate</text>
        <dbReference type="Rhea" id="RHEA:13481"/>
        <dbReference type="Rhea" id="RHEA-COMP:9667"/>
        <dbReference type="Rhea" id="RHEA-COMP:9698"/>
        <dbReference type="ChEBI" id="CHEBI:30616"/>
        <dbReference type="ChEBI" id="CHEBI:33019"/>
        <dbReference type="ChEBI" id="CHEBI:57844"/>
        <dbReference type="ChEBI" id="CHEBI:78442"/>
        <dbReference type="ChEBI" id="CHEBI:78530"/>
        <dbReference type="ChEBI" id="CHEBI:456215"/>
        <dbReference type="EC" id="6.1.1.10"/>
    </reaction>
</comment>
<comment type="cofactor">
    <cofactor evidence="1">
        <name>Zn(2+)</name>
        <dbReference type="ChEBI" id="CHEBI:29105"/>
    </cofactor>
    <text evidence="1">Binds 1 zinc ion per subunit.</text>
</comment>
<comment type="subunit">
    <text evidence="1">Homodimer.</text>
</comment>
<comment type="subcellular location">
    <subcellularLocation>
        <location evidence="1">Cytoplasm</location>
    </subcellularLocation>
</comment>
<comment type="similarity">
    <text evidence="1">Belongs to the class-I aminoacyl-tRNA synthetase family. MetG type 1 subfamily.</text>
</comment>
<evidence type="ECO:0000255" key="1">
    <source>
        <dbReference type="HAMAP-Rule" id="MF_00098"/>
    </source>
</evidence>
<proteinExistence type="inferred from homology"/>
<gene>
    <name evidence="1" type="primary">metG</name>
    <name type="ordered locus">Lferr_2296</name>
</gene>
<feature type="chain" id="PRO_1000199269" description="Methionine--tRNA ligase">
    <location>
        <begin position="1"/>
        <end position="678"/>
    </location>
</feature>
<feature type="domain" description="tRNA-binding" evidence="1">
    <location>
        <begin position="577"/>
        <end position="678"/>
    </location>
</feature>
<feature type="short sequence motif" description="'HIGH' region">
    <location>
        <begin position="12"/>
        <end position="22"/>
    </location>
</feature>
<feature type="short sequence motif" description="'KMSKS' region">
    <location>
        <begin position="328"/>
        <end position="332"/>
    </location>
</feature>
<feature type="binding site" evidence="1">
    <location>
        <position position="143"/>
    </location>
    <ligand>
        <name>Zn(2+)</name>
        <dbReference type="ChEBI" id="CHEBI:29105"/>
    </ligand>
</feature>
<feature type="binding site" evidence="1">
    <location>
        <position position="146"/>
    </location>
    <ligand>
        <name>Zn(2+)</name>
        <dbReference type="ChEBI" id="CHEBI:29105"/>
    </ligand>
</feature>
<feature type="binding site" evidence="1">
    <location>
        <position position="156"/>
    </location>
    <ligand>
        <name>Zn(2+)</name>
        <dbReference type="ChEBI" id="CHEBI:29105"/>
    </ligand>
</feature>
<feature type="binding site" evidence="1">
    <location>
        <position position="159"/>
    </location>
    <ligand>
        <name>Zn(2+)</name>
        <dbReference type="ChEBI" id="CHEBI:29105"/>
    </ligand>
</feature>
<feature type="binding site" evidence="1">
    <location>
        <position position="331"/>
    </location>
    <ligand>
        <name>ATP</name>
        <dbReference type="ChEBI" id="CHEBI:30616"/>
    </ligand>
</feature>
<keyword id="KW-0030">Aminoacyl-tRNA synthetase</keyword>
<keyword id="KW-0067">ATP-binding</keyword>
<keyword id="KW-0963">Cytoplasm</keyword>
<keyword id="KW-0436">Ligase</keyword>
<keyword id="KW-0479">Metal-binding</keyword>
<keyword id="KW-0547">Nucleotide-binding</keyword>
<keyword id="KW-0648">Protein biosynthesis</keyword>
<keyword id="KW-0694">RNA-binding</keyword>
<keyword id="KW-0820">tRNA-binding</keyword>
<keyword id="KW-0862">Zinc</keyword>
<sequence>MKRRILITSALPYANGPIHLGHLVEYTQTDIWARYQRLRGHDCVYVCADDAHGTPIMLRAQSEGITPEELITRMHGDHLRDFTGFGIRFDLYHSTHSPENFEISQSIYRALRAADYINVREIEQAYDPVAGIFLPDRFIRGTCPRCGAADQYGDSCEVCGATYSPTDLINPVSAVSGAVPERRNSEHYFFQLGDFSDFLRRWIHSGTLQEEVAHKLDEWFSIGLSDWDISRDAPYFGIPIPDAPGKFFYVWLDALPGYMAATQHWCAAHGRNLADYWGPDSAAEIYHFIGKDIIYFHGLFWPAMLKGSGHRLPTGIFAHGHLTVNGAKMSKSRGTSITARQYLQHLNPEFLRYYIATKLNSHVEDIDLNLEDFLLRGNGDLVGKVVNLASRAAGFIHRSFAGRLAASLGKDQAFYDGLLQTQEAIGEAYAGREYGKAMRDIMALADQINAYVDQNAPWTLAKDPAQHESLHRVVTVTLNGFRVLITLLSPVLPELSRKALEFLQCELDWAGLSKPLLDHQILPYSHLLQRMEKTQVDALIQNPAESPATAPGTAAAPVPTPVPAEAREENPFIGIDDFSKVDLRIARIVAATNVDGADKLLHLTLDIGEGTRSVFAGIKSAYDPASLVGRLTVMVANLAPRKMRFGLSEGMVLAASGPEGGPFLLSPDSGAQPGMRVK</sequence>
<dbReference type="EC" id="6.1.1.10" evidence="1"/>
<dbReference type="EMBL" id="CP001132">
    <property type="protein sequence ID" value="ACH84497.1"/>
    <property type="molecule type" value="Genomic_DNA"/>
</dbReference>
<dbReference type="RefSeq" id="WP_012537326.1">
    <property type="nucleotide sequence ID" value="NC_011206.1"/>
</dbReference>
<dbReference type="SMR" id="B5ENA8"/>
<dbReference type="GeneID" id="65281715"/>
<dbReference type="KEGG" id="afe:Lferr_2296"/>
<dbReference type="eggNOG" id="COG0073">
    <property type="taxonomic scope" value="Bacteria"/>
</dbReference>
<dbReference type="eggNOG" id="COG0143">
    <property type="taxonomic scope" value="Bacteria"/>
</dbReference>
<dbReference type="HOGENOM" id="CLU_009710_7_0_6"/>
<dbReference type="GO" id="GO:0005829">
    <property type="term" value="C:cytosol"/>
    <property type="evidence" value="ECO:0007669"/>
    <property type="project" value="TreeGrafter"/>
</dbReference>
<dbReference type="GO" id="GO:0005524">
    <property type="term" value="F:ATP binding"/>
    <property type="evidence" value="ECO:0007669"/>
    <property type="project" value="UniProtKB-UniRule"/>
</dbReference>
<dbReference type="GO" id="GO:0046872">
    <property type="term" value="F:metal ion binding"/>
    <property type="evidence" value="ECO:0007669"/>
    <property type="project" value="UniProtKB-KW"/>
</dbReference>
<dbReference type="GO" id="GO:0004825">
    <property type="term" value="F:methionine-tRNA ligase activity"/>
    <property type="evidence" value="ECO:0007669"/>
    <property type="project" value="UniProtKB-UniRule"/>
</dbReference>
<dbReference type="GO" id="GO:0000049">
    <property type="term" value="F:tRNA binding"/>
    <property type="evidence" value="ECO:0007669"/>
    <property type="project" value="UniProtKB-KW"/>
</dbReference>
<dbReference type="GO" id="GO:0006431">
    <property type="term" value="P:methionyl-tRNA aminoacylation"/>
    <property type="evidence" value="ECO:0007669"/>
    <property type="project" value="UniProtKB-UniRule"/>
</dbReference>
<dbReference type="CDD" id="cd07957">
    <property type="entry name" value="Anticodon_Ia_Met"/>
    <property type="match status" value="1"/>
</dbReference>
<dbReference type="CDD" id="cd00814">
    <property type="entry name" value="MetRS_core"/>
    <property type="match status" value="1"/>
</dbReference>
<dbReference type="CDD" id="cd02800">
    <property type="entry name" value="tRNA_bind_EcMetRS_like"/>
    <property type="match status" value="1"/>
</dbReference>
<dbReference type="FunFam" id="2.20.28.20:FF:000001">
    <property type="entry name" value="Methionine--tRNA ligase"/>
    <property type="match status" value="1"/>
</dbReference>
<dbReference type="FunFam" id="2.40.50.140:FF:000042">
    <property type="entry name" value="Methionine--tRNA ligase"/>
    <property type="match status" value="1"/>
</dbReference>
<dbReference type="Gene3D" id="3.40.50.620">
    <property type="entry name" value="HUPs"/>
    <property type="match status" value="1"/>
</dbReference>
<dbReference type="Gene3D" id="1.10.730.10">
    <property type="entry name" value="Isoleucyl-tRNA Synthetase, Domain 1"/>
    <property type="match status" value="1"/>
</dbReference>
<dbReference type="Gene3D" id="2.20.28.20">
    <property type="entry name" value="Methionyl-tRNA synthetase, Zn-domain"/>
    <property type="match status" value="1"/>
</dbReference>
<dbReference type="Gene3D" id="2.40.50.140">
    <property type="entry name" value="Nucleic acid-binding proteins"/>
    <property type="match status" value="1"/>
</dbReference>
<dbReference type="HAMAP" id="MF_00098">
    <property type="entry name" value="Met_tRNA_synth_type1"/>
    <property type="match status" value="1"/>
</dbReference>
<dbReference type="InterPro" id="IPR001412">
    <property type="entry name" value="aa-tRNA-synth_I_CS"/>
</dbReference>
<dbReference type="InterPro" id="IPR041872">
    <property type="entry name" value="Anticodon_Met"/>
</dbReference>
<dbReference type="InterPro" id="IPR004495">
    <property type="entry name" value="Met-tRNA-synth_bsu_C"/>
</dbReference>
<dbReference type="InterPro" id="IPR023458">
    <property type="entry name" value="Met-tRNA_ligase_1"/>
</dbReference>
<dbReference type="InterPro" id="IPR014758">
    <property type="entry name" value="Met-tRNA_synth"/>
</dbReference>
<dbReference type="InterPro" id="IPR015413">
    <property type="entry name" value="Methionyl/Leucyl_tRNA_Synth"/>
</dbReference>
<dbReference type="InterPro" id="IPR033911">
    <property type="entry name" value="MetRS_core"/>
</dbReference>
<dbReference type="InterPro" id="IPR029038">
    <property type="entry name" value="MetRS_Zn"/>
</dbReference>
<dbReference type="InterPro" id="IPR012340">
    <property type="entry name" value="NA-bd_OB-fold"/>
</dbReference>
<dbReference type="InterPro" id="IPR014729">
    <property type="entry name" value="Rossmann-like_a/b/a_fold"/>
</dbReference>
<dbReference type="InterPro" id="IPR002547">
    <property type="entry name" value="tRNA-bd_dom"/>
</dbReference>
<dbReference type="InterPro" id="IPR009080">
    <property type="entry name" value="tRNAsynth_Ia_anticodon-bd"/>
</dbReference>
<dbReference type="NCBIfam" id="TIGR00398">
    <property type="entry name" value="metG"/>
    <property type="match status" value="1"/>
</dbReference>
<dbReference type="NCBIfam" id="TIGR00399">
    <property type="entry name" value="metG_C_term"/>
    <property type="match status" value="1"/>
</dbReference>
<dbReference type="NCBIfam" id="NF001100">
    <property type="entry name" value="PRK00133.1"/>
    <property type="match status" value="1"/>
</dbReference>
<dbReference type="PANTHER" id="PTHR45765">
    <property type="entry name" value="METHIONINE--TRNA LIGASE"/>
    <property type="match status" value="1"/>
</dbReference>
<dbReference type="PANTHER" id="PTHR45765:SF1">
    <property type="entry name" value="METHIONINE--TRNA LIGASE, CYTOPLASMIC"/>
    <property type="match status" value="1"/>
</dbReference>
<dbReference type="Pfam" id="PF19303">
    <property type="entry name" value="Anticodon_3"/>
    <property type="match status" value="1"/>
</dbReference>
<dbReference type="Pfam" id="PF09334">
    <property type="entry name" value="tRNA-synt_1g"/>
    <property type="match status" value="1"/>
</dbReference>
<dbReference type="Pfam" id="PF01588">
    <property type="entry name" value="tRNA_bind"/>
    <property type="match status" value="1"/>
</dbReference>
<dbReference type="PRINTS" id="PR01041">
    <property type="entry name" value="TRNASYNTHMET"/>
</dbReference>
<dbReference type="SUPFAM" id="SSF47323">
    <property type="entry name" value="Anticodon-binding domain of a subclass of class I aminoacyl-tRNA synthetases"/>
    <property type="match status" value="1"/>
</dbReference>
<dbReference type="SUPFAM" id="SSF57770">
    <property type="entry name" value="Methionyl-tRNA synthetase (MetRS), Zn-domain"/>
    <property type="match status" value="1"/>
</dbReference>
<dbReference type="SUPFAM" id="SSF50249">
    <property type="entry name" value="Nucleic acid-binding proteins"/>
    <property type="match status" value="1"/>
</dbReference>
<dbReference type="SUPFAM" id="SSF52374">
    <property type="entry name" value="Nucleotidylyl transferase"/>
    <property type="match status" value="1"/>
</dbReference>
<dbReference type="PROSITE" id="PS00178">
    <property type="entry name" value="AA_TRNA_LIGASE_I"/>
    <property type="match status" value="1"/>
</dbReference>
<dbReference type="PROSITE" id="PS50886">
    <property type="entry name" value="TRBD"/>
    <property type="match status" value="1"/>
</dbReference>
<organism>
    <name type="scientific">Acidithiobacillus ferrooxidans (strain ATCC 53993 / BNL-5-31)</name>
    <name type="common">Leptospirillum ferrooxidans (ATCC 53993)</name>
    <dbReference type="NCBI Taxonomy" id="380394"/>
    <lineage>
        <taxon>Bacteria</taxon>
        <taxon>Pseudomonadati</taxon>
        <taxon>Pseudomonadota</taxon>
        <taxon>Acidithiobacillia</taxon>
        <taxon>Acidithiobacillales</taxon>
        <taxon>Acidithiobacillaceae</taxon>
        <taxon>Acidithiobacillus</taxon>
    </lineage>
</organism>